<comment type="function">
    <text evidence="1">Palmitoyltransferase specific for VAC8. Palmitoylates VAC8 at one or more of its N-terminal cysteine residues, which is required for its proper membrane localization (By similarity).</text>
</comment>
<comment type="catalytic activity">
    <reaction>
        <text>L-cysteinyl-[protein] + hexadecanoyl-CoA = S-hexadecanoyl-L-cysteinyl-[protein] + CoA</text>
        <dbReference type="Rhea" id="RHEA:36683"/>
        <dbReference type="Rhea" id="RHEA-COMP:10131"/>
        <dbReference type="Rhea" id="RHEA-COMP:11032"/>
        <dbReference type="ChEBI" id="CHEBI:29950"/>
        <dbReference type="ChEBI" id="CHEBI:57287"/>
        <dbReference type="ChEBI" id="CHEBI:57379"/>
        <dbReference type="ChEBI" id="CHEBI:74151"/>
        <dbReference type="EC" id="2.3.1.225"/>
    </reaction>
</comment>
<comment type="subcellular location">
    <subcellularLocation>
        <location evidence="1">Vacuole membrane</location>
        <topology evidence="1">Multi-pass membrane protein</topology>
    </subcellularLocation>
</comment>
<comment type="domain">
    <text evidence="1">The DHHC domain is required for palmitoyltransferase activity.</text>
</comment>
<comment type="PTM">
    <text evidence="1">Autopalmitoylated.</text>
</comment>
<comment type="similarity">
    <text evidence="4">Belongs to the DHHC palmitoyltransferase family. PFA3 subfamily.</text>
</comment>
<keyword id="KW-0012">Acyltransferase</keyword>
<keyword id="KW-0449">Lipoprotein</keyword>
<keyword id="KW-0472">Membrane</keyword>
<keyword id="KW-0564">Palmitate</keyword>
<keyword id="KW-1185">Reference proteome</keyword>
<keyword id="KW-0808">Transferase</keyword>
<keyword id="KW-0812">Transmembrane</keyword>
<keyword id="KW-1133">Transmembrane helix</keyword>
<keyword id="KW-0926">Vacuole</keyword>
<protein>
    <recommendedName>
        <fullName>Palmitoyltransferase PFA3</fullName>
        <ecNumber>2.3.1.225</ecNumber>
    </recommendedName>
    <alternativeName>
        <fullName>Protein fatty acyltransferase 3</fullName>
    </alternativeName>
</protein>
<proteinExistence type="inferred from homology"/>
<feature type="chain" id="PRO_0000212952" description="Palmitoyltransferase PFA3">
    <location>
        <begin position="1"/>
        <end position="332"/>
    </location>
</feature>
<feature type="topological domain" description="Cytoplasmic" evidence="2">
    <location>
        <begin position="1"/>
        <end position="13"/>
    </location>
</feature>
<feature type="transmembrane region" description="Helical" evidence="2">
    <location>
        <begin position="14"/>
        <end position="34"/>
    </location>
</feature>
<feature type="topological domain" description="Lumenal" evidence="2">
    <location>
        <begin position="35"/>
        <end position="37"/>
    </location>
</feature>
<feature type="transmembrane region" description="Helical" evidence="2">
    <location>
        <begin position="38"/>
        <end position="58"/>
    </location>
</feature>
<feature type="topological domain" description="Cytoplasmic" evidence="2">
    <location>
        <begin position="59"/>
        <end position="147"/>
    </location>
</feature>
<feature type="transmembrane region" description="Helical" evidence="2">
    <location>
        <begin position="148"/>
        <end position="168"/>
    </location>
</feature>
<feature type="topological domain" description="Lumenal" evidence="2">
    <location>
        <begin position="169"/>
        <end position="188"/>
    </location>
</feature>
<feature type="transmembrane region" description="Helical" evidence="2">
    <location>
        <begin position="189"/>
        <end position="209"/>
    </location>
</feature>
<feature type="topological domain" description="Cytoplasmic" evidence="2">
    <location>
        <begin position="210"/>
        <end position="332"/>
    </location>
</feature>
<feature type="domain" description="DHHC" evidence="3">
    <location>
        <begin position="104"/>
        <end position="154"/>
    </location>
</feature>
<accession>Q6FW70</accession>
<gene>
    <name type="primary">PFA3</name>
    <name type="ordered locus">CAGL0D02508g</name>
</gene>
<name>PFA3_CANGA</name>
<organism>
    <name type="scientific">Candida glabrata (strain ATCC 2001 / BCRC 20586 / JCM 3761 / NBRC 0622 / NRRL Y-65 / CBS 138)</name>
    <name type="common">Yeast</name>
    <name type="synonym">Nakaseomyces glabratus</name>
    <dbReference type="NCBI Taxonomy" id="284593"/>
    <lineage>
        <taxon>Eukaryota</taxon>
        <taxon>Fungi</taxon>
        <taxon>Dikarya</taxon>
        <taxon>Ascomycota</taxon>
        <taxon>Saccharomycotina</taxon>
        <taxon>Saccharomycetes</taxon>
        <taxon>Saccharomycetales</taxon>
        <taxon>Saccharomycetaceae</taxon>
        <taxon>Nakaseomyces</taxon>
    </lineage>
</organism>
<sequence>MNLVNNFSKLFPRCLTTGLYLWSLYAIVVCIHVIRARVVLPLVFTIAMVALYTYAKLIYVGPGTTKEYSILRVYDLNAAESGFELPPEMLVKRSYTQKRNGRFRVCKSCSSWKPDRCHHCSTCNVCVLKMDHHCPWFAGCVGYRNQKFFIQFLIYCTVYSILVLILSSMEIYTWFKGEFFEVELINFTLLSLWLLALVVSISITIFTVFSISQVCQNQTTIELYSLRRYNEEVAFLNEFSNEPIKGTINIFDLGKKLINWEEVMGYSLIEWALPISRRPSSLDLEGSHSHGLFFNVNKNVSKTMNESVDLQDRLLRRLTPRSSLDVDRSNFV</sequence>
<dbReference type="EC" id="2.3.1.225"/>
<dbReference type="EMBL" id="CR380950">
    <property type="protein sequence ID" value="CAG58435.1"/>
    <property type="molecule type" value="Genomic_DNA"/>
</dbReference>
<dbReference type="RefSeq" id="XP_445524.1">
    <property type="nucleotide sequence ID" value="XM_445524.1"/>
</dbReference>
<dbReference type="SMR" id="Q6FW70"/>
<dbReference type="FunCoup" id="Q6FW70">
    <property type="interactions" value="476"/>
</dbReference>
<dbReference type="STRING" id="284593.Q6FW70"/>
<dbReference type="DNASU" id="2886970"/>
<dbReference type="KEGG" id="cgr:2886970"/>
<dbReference type="eggNOG" id="KOG1315">
    <property type="taxonomic scope" value="Eukaryota"/>
</dbReference>
<dbReference type="HOGENOM" id="CLU_027721_0_0_1"/>
<dbReference type="InParanoid" id="Q6FW70"/>
<dbReference type="OMA" id="YTYFKVI"/>
<dbReference type="Proteomes" id="UP000002428">
    <property type="component" value="Chromosome D"/>
</dbReference>
<dbReference type="GO" id="GO:0005774">
    <property type="term" value="C:vacuolar membrane"/>
    <property type="evidence" value="ECO:0007669"/>
    <property type="project" value="UniProtKB-SubCell"/>
</dbReference>
<dbReference type="GO" id="GO:0019706">
    <property type="term" value="F:protein-cysteine S-palmitoyltransferase activity"/>
    <property type="evidence" value="ECO:0007669"/>
    <property type="project" value="UniProtKB-EC"/>
</dbReference>
<dbReference type="InterPro" id="IPR001594">
    <property type="entry name" value="Palmitoyltrfase_DHHC"/>
</dbReference>
<dbReference type="InterPro" id="IPR039859">
    <property type="entry name" value="PFA4/ZDH16/20/ERF2-like"/>
</dbReference>
<dbReference type="PANTHER" id="PTHR12246">
    <property type="entry name" value="PALMITOYLTRANSFERASE ZDHHC16"/>
    <property type="match status" value="1"/>
</dbReference>
<dbReference type="Pfam" id="PF01529">
    <property type="entry name" value="DHHC"/>
    <property type="match status" value="1"/>
</dbReference>
<dbReference type="PROSITE" id="PS50216">
    <property type="entry name" value="DHHC"/>
    <property type="match status" value="1"/>
</dbReference>
<evidence type="ECO:0000250" key="1"/>
<evidence type="ECO:0000255" key="2"/>
<evidence type="ECO:0000255" key="3">
    <source>
        <dbReference type="PROSITE-ProRule" id="PRU00067"/>
    </source>
</evidence>
<evidence type="ECO:0000305" key="4"/>
<reference key="1">
    <citation type="journal article" date="2004" name="Nature">
        <title>Genome evolution in yeasts.</title>
        <authorList>
            <person name="Dujon B."/>
            <person name="Sherman D."/>
            <person name="Fischer G."/>
            <person name="Durrens P."/>
            <person name="Casaregola S."/>
            <person name="Lafontaine I."/>
            <person name="de Montigny J."/>
            <person name="Marck C."/>
            <person name="Neuveglise C."/>
            <person name="Talla E."/>
            <person name="Goffard N."/>
            <person name="Frangeul L."/>
            <person name="Aigle M."/>
            <person name="Anthouard V."/>
            <person name="Babour A."/>
            <person name="Barbe V."/>
            <person name="Barnay S."/>
            <person name="Blanchin S."/>
            <person name="Beckerich J.-M."/>
            <person name="Beyne E."/>
            <person name="Bleykasten C."/>
            <person name="Boisrame A."/>
            <person name="Boyer J."/>
            <person name="Cattolico L."/>
            <person name="Confanioleri F."/>
            <person name="de Daruvar A."/>
            <person name="Despons L."/>
            <person name="Fabre E."/>
            <person name="Fairhead C."/>
            <person name="Ferry-Dumazet H."/>
            <person name="Groppi A."/>
            <person name="Hantraye F."/>
            <person name="Hennequin C."/>
            <person name="Jauniaux N."/>
            <person name="Joyet P."/>
            <person name="Kachouri R."/>
            <person name="Kerrest A."/>
            <person name="Koszul R."/>
            <person name="Lemaire M."/>
            <person name="Lesur I."/>
            <person name="Ma L."/>
            <person name="Muller H."/>
            <person name="Nicaud J.-M."/>
            <person name="Nikolski M."/>
            <person name="Oztas S."/>
            <person name="Ozier-Kalogeropoulos O."/>
            <person name="Pellenz S."/>
            <person name="Potier S."/>
            <person name="Richard G.-F."/>
            <person name="Straub M.-L."/>
            <person name="Suleau A."/>
            <person name="Swennen D."/>
            <person name="Tekaia F."/>
            <person name="Wesolowski-Louvel M."/>
            <person name="Westhof E."/>
            <person name="Wirth B."/>
            <person name="Zeniou-Meyer M."/>
            <person name="Zivanovic Y."/>
            <person name="Bolotin-Fukuhara M."/>
            <person name="Thierry A."/>
            <person name="Bouchier C."/>
            <person name="Caudron B."/>
            <person name="Scarpelli C."/>
            <person name="Gaillardin C."/>
            <person name="Weissenbach J."/>
            <person name="Wincker P."/>
            <person name="Souciet J.-L."/>
        </authorList>
    </citation>
    <scope>NUCLEOTIDE SEQUENCE [LARGE SCALE GENOMIC DNA]</scope>
    <source>
        <strain>ATCC 2001 / BCRC 20586 / JCM 3761 / NBRC 0622 / NRRL Y-65 / CBS 138</strain>
    </source>
</reference>